<proteinExistence type="inferred from homology"/>
<dbReference type="EC" id="2.4.2.18" evidence="1"/>
<dbReference type="EMBL" id="CP000142">
    <property type="protein sequence ID" value="ABA87991.1"/>
    <property type="molecule type" value="Genomic_DNA"/>
</dbReference>
<dbReference type="RefSeq" id="WP_011340434.1">
    <property type="nucleotide sequence ID" value="NC_007498.2"/>
</dbReference>
<dbReference type="SMR" id="Q3A6L6"/>
<dbReference type="STRING" id="338963.Pcar_0732"/>
<dbReference type="KEGG" id="pca:Pcar_0732"/>
<dbReference type="eggNOG" id="COG0547">
    <property type="taxonomic scope" value="Bacteria"/>
</dbReference>
<dbReference type="HOGENOM" id="CLU_034315_2_1_7"/>
<dbReference type="OrthoDB" id="9806430at2"/>
<dbReference type="UniPathway" id="UPA00035">
    <property type="reaction ID" value="UER00041"/>
</dbReference>
<dbReference type="Proteomes" id="UP000002534">
    <property type="component" value="Chromosome"/>
</dbReference>
<dbReference type="GO" id="GO:0005829">
    <property type="term" value="C:cytosol"/>
    <property type="evidence" value="ECO:0007669"/>
    <property type="project" value="TreeGrafter"/>
</dbReference>
<dbReference type="GO" id="GO:0004048">
    <property type="term" value="F:anthranilate phosphoribosyltransferase activity"/>
    <property type="evidence" value="ECO:0007669"/>
    <property type="project" value="UniProtKB-UniRule"/>
</dbReference>
<dbReference type="GO" id="GO:0000287">
    <property type="term" value="F:magnesium ion binding"/>
    <property type="evidence" value="ECO:0007669"/>
    <property type="project" value="UniProtKB-UniRule"/>
</dbReference>
<dbReference type="GO" id="GO:0000162">
    <property type="term" value="P:L-tryptophan biosynthetic process"/>
    <property type="evidence" value="ECO:0007669"/>
    <property type="project" value="UniProtKB-UniRule"/>
</dbReference>
<dbReference type="FunFam" id="1.20.970.10:FF:000006">
    <property type="entry name" value="Anthranilate phosphoribosyltransferase"/>
    <property type="match status" value="1"/>
</dbReference>
<dbReference type="FunFam" id="3.40.1030.10:FF:000002">
    <property type="entry name" value="Anthranilate phosphoribosyltransferase"/>
    <property type="match status" value="1"/>
</dbReference>
<dbReference type="Gene3D" id="3.40.1030.10">
    <property type="entry name" value="Nucleoside phosphorylase/phosphoribosyltransferase catalytic domain"/>
    <property type="match status" value="1"/>
</dbReference>
<dbReference type="Gene3D" id="1.20.970.10">
    <property type="entry name" value="Transferase, Pyrimidine Nucleoside Phosphorylase, Chain C"/>
    <property type="match status" value="1"/>
</dbReference>
<dbReference type="HAMAP" id="MF_00211">
    <property type="entry name" value="TrpD"/>
    <property type="match status" value="1"/>
</dbReference>
<dbReference type="InterPro" id="IPR005940">
    <property type="entry name" value="Anthranilate_Pribosyl_Tfrase"/>
</dbReference>
<dbReference type="InterPro" id="IPR000312">
    <property type="entry name" value="Glycosyl_Trfase_fam3"/>
</dbReference>
<dbReference type="InterPro" id="IPR017459">
    <property type="entry name" value="Glycosyl_Trfase_fam3_N_dom"/>
</dbReference>
<dbReference type="InterPro" id="IPR036320">
    <property type="entry name" value="Glycosyl_Trfase_fam3_N_dom_sf"/>
</dbReference>
<dbReference type="InterPro" id="IPR035902">
    <property type="entry name" value="Nuc_phospho_transferase"/>
</dbReference>
<dbReference type="NCBIfam" id="TIGR01245">
    <property type="entry name" value="trpD"/>
    <property type="match status" value="1"/>
</dbReference>
<dbReference type="PANTHER" id="PTHR43285">
    <property type="entry name" value="ANTHRANILATE PHOSPHORIBOSYLTRANSFERASE"/>
    <property type="match status" value="1"/>
</dbReference>
<dbReference type="PANTHER" id="PTHR43285:SF2">
    <property type="entry name" value="ANTHRANILATE PHOSPHORIBOSYLTRANSFERASE"/>
    <property type="match status" value="1"/>
</dbReference>
<dbReference type="Pfam" id="PF02885">
    <property type="entry name" value="Glycos_trans_3N"/>
    <property type="match status" value="1"/>
</dbReference>
<dbReference type="Pfam" id="PF00591">
    <property type="entry name" value="Glycos_transf_3"/>
    <property type="match status" value="1"/>
</dbReference>
<dbReference type="SUPFAM" id="SSF52418">
    <property type="entry name" value="Nucleoside phosphorylase/phosphoribosyltransferase catalytic domain"/>
    <property type="match status" value="1"/>
</dbReference>
<dbReference type="SUPFAM" id="SSF47648">
    <property type="entry name" value="Nucleoside phosphorylase/phosphoribosyltransferase N-terminal domain"/>
    <property type="match status" value="1"/>
</dbReference>
<evidence type="ECO:0000255" key="1">
    <source>
        <dbReference type="HAMAP-Rule" id="MF_00211"/>
    </source>
</evidence>
<keyword id="KW-0028">Amino-acid biosynthesis</keyword>
<keyword id="KW-0057">Aromatic amino acid biosynthesis</keyword>
<keyword id="KW-0328">Glycosyltransferase</keyword>
<keyword id="KW-0460">Magnesium</keyword>
<keyword id="KW-0479">Metal-binding</keyword>
<keyword id="KW-1185">Reference proteome</keyword>
<keyword id="KW-0808">Transferase</keyword>
<keyword id="KW-0822">Tryptophan biosynthesis</keyword>
<protein>
    <recommendedName>
        <fullName evidence="1">Anthranilate phosphoribosyltransferase</fullName>
        <ecNumber evidence="1">2.4.2.18</ecNumber>
    </recommendedName>
</protein>
<sequence length="352" mass="37409">MIRQAIARVVEGQNLKESDMIEVMNQIMGGEATPAQIGALIVALRMKGETVEEITGAARVMRDHATPVRVGRVLDIDREEINLDQETMAAVLDTCGTGGSGTKSFNISTTVAFVVAACGVKVAKHGNRSVSSMCGSADVLEALGVHLDIGVDTVERCIAEEGIGFLFAPALHGAMRYAIGPRREIGIRTIFNILGPLTNPAGADRQVLGVYREDLVATLADVLCRLGCRRGFVVHGMDGMDEVTLTAPTRIADIREGRYSLSTIAPEDYGLQRCRLEDLAGGDARHNAELVRGILAGEAGPRRDIVLLNSAFALVAAGKADSIEDGMRAAAQAIDEHAALAKLNALIRMTQP</sequence>
<name>TRPD_SYNC1</name>
<gene>
    <name evidence="1" type="primary">trpD</name>
    <name type="ordered locus">Pcar_0732</name>
</gene>
<feature type="chain" id="PRO_0000227174" description="Anthranilate phosphoribosyltransferase">
    <location>
        <begin position="1"/>
        <end position="352"/>
    </location>
</feature>
<feature type="binding site" evidence="1">
    <location>
        <position position="96"/>
    </location>
    <ligand>
        <name>5-phospho-alpha-D-ribose 1-diphosphate</name>
        <dbReference type="ChEBI" id="CHEBI:58017"/>
    </ligand>
</feature>
<feature type="binding site" evidence="1">
    <location>
        <position position="96"/>
    </location>
    <ligand>
        <name>anthranilate</name>
        <dbReference type="ChEBI" id="CHEBI:16567"/>
        <label>1</label>
    </ligand>
</feature>
<feature type="binding site" evidence="1">
    <location>
        <begin position="99"/>
        <end position="100"/>
    </location>
    <ligand>
        <name>5-phospho-alpha-D-ribose 1-diphosphate</name>
        <dbReference type="ChEBI" id="CHEBI:58017"/>
    </ligand>
</feature>
<feature type="binding site" evidence="1">
    <location>
        <position position="104"/>
    </location>
    <ligand>
        <name>5-phospho-alpha-D-ribose 1-diphosphate</name>
        <dbReference type="ChEBI" id="CHEBI:58017"/>
    </ligand>
</feature>
<feature type="binding site" evidence="1">
    <location>
        <begin position="106"/>
        <end position="109"/>
    </location>
    <ligand>
        <name>5-phospho-alpha-D-ribose 1-diphosphate</name>
        <dbReference type="ChEBI" id="CHEBI:58017"/>
    </ligand>
</feature>
<feature type="binding site" evidence="1">
    <location>
        <position position="108"/>
    </location>
    <ligand>
        <name>Mg(2+)</name>
        <dbReference type="ChEBI" id="CHEBI:18420"/>
        <label>1</label>
    </ligand>
</feature>
<feature type="binding site" evidence="1">
    <location>
        <begin position="124"/>
        <end position="132"/>
    </location>
    <ligand>
        <name>5-phospho-alpha-D-ribose 1-diphosphate</name>
        <dbReference type="ChEBI" id="CHEBI:58017"/>
    </ligand>
</feature>
<feature type="binding site" evidence="1">
    <location>
        <position position="127"/>
    </location>
    <ligand>
        <name>anthranilate</name>
        <dbReference type="ChEBI" id="CHEBI:16567"/>
        <label>1</label>
    </ligand>
</feature>
<feature type="binding site" evidence="1">
    <location>
        <position position="136"/>
    </location>
    <ligand>
        <name>5-phospho-alpha-D-ribose 1-diphosphate</name>
        <dbReference type="ChEBI" id="CHEBI:58017"/>
    </ligand>
</feature>
<feature type="binding site" evidence="1">
    <location>
        <position position="182"/>
    </location>
    <ligand>
        <name>anthranilate</name>
        <dbReference type="ChEBI" id="CHEBI:16567"/>
        <label>2</label>
    </ligand>
</feature>
<feature type="binding site" evidence="1">
    <location>
        <position position="241"/>
    </location>
    <ligand>
        <name>Mg(2+)</name>
        <dbReference type="ChEBI" id="CHEBI:18420"/>
        <label>2</label>
    </ligand>
</feature>
<feature type="binding site" evidence="1">
    <location>
        <position position="242"/>
    </location>
    <ligand>
        <name>Mg(2+)</name>
        <dbReference type="ChEBI" id="CHEBI:18420"/>
        <label>1</label>
    </ligand>
</feature>
<feature type="binding site" evidence="1">
    <location>
        <position position="242"/>
    </location>
    <ligand>
        <name>Mg(2+)</name>
        <dbReference type="ChEBI" id="CHEBI:18420"/>
        <label>2</label>
    </ligand>
</feature>
<reference key="1">
    <citation type="submission" date="2005-10" db="EMBL/GenBank/DDBJ databases">
        <title>Complete sequence of Pelobacter carbinolicus DSM 2380.</title>
        <authorList>
            <person name="Copeland A."/>
            <person name="Lucas S."/>
            <person name="Lapidus A."/>
            <person name="Barry K."/>
            <person name="Detter J.C."/>
            <person name="Glavina T."/>
            <person name="Hammon N."/>
            <person name="Israni S."/>
            <person name="Pitluck S."/>
            <person name="Chertkov O."/>
            <person name="Schmutz J."/>
            <person name="Larimer F."/>
            <person name="Land M."/>
            <person name="Kyrpides N."/>
            <person name="Ivanova N."/>
            <person name="Richardson P."/>
        </authorList>
    </citation>
    <scope>NUCLEOTIDE SEQUENCE [LARGE SCALE GENOMIC DNA]</scope>
    <source>
        <strain>DSM 2380 / NBRC 103641 / GraBd1</strain>
    </source>
</reference>
<organism>
    <name type="scientific">Syntrophotalea carbinolica (strain DSM 2380 / NBRC 103641 / GraBd1)</name>
    <name type="common">Pelobacter carbinolicus</name>
    <dbReference type="NCBI Taxonomy" id="338963"/>
    <lineage>
        <taxon>Bacteria</taxon>
        <taxon>Pseudomonadati</taxon>
        <taxon>Thermodesulfobacteriota</taxon>
        <taxon>Desulfuromonadia</taxon>
        <taxon>Desulfuromonadales</taxon>
        <taxon>Syntrophotaleaceae</taxon>
        <taxon>Syntrophotalea</taxon>
    </lineage>
</organism>
<accession>Q3A6L6</accession>
<comment type="function">
    <text evidence="1">Catalyzes the transfer of the phosphoribosyl group of 5-phosphorylribose-1-pyrophosphate (PRPP) to anthranilate to yield N-(5'-phosphoribosyl)-anthranilate (PRA).</text>
</comment>
<comment type="catalytic activity">
    <reaction evidence="1">
        <text>N-(5-phospho-beta-D-ribosyl)anthranilate + diphosphate = 5-phospho-alpha-D-ribose 1-diphosphate + anthranilate</text>
        <dbReference type="Rhea" id="RHEA:11768"/>
        <dbReference type="ChEBI" id="CHEBI:16567"/>
        <dbReference type="ChEBI" id="CHEBI:18277"/>
        <dbReference type="ChEBI" id="CHEBI:33019"/>
        <dbReference type="ChEBI" id="CHEBI:58017"/>
        <dbReference type="EC" id="2.4.2.18"/>
    </reaction>
</comment>
<comment type="cofactor">
    <cofactor evidence="1">
        <name>Mg(2+)</name>
        <dbReference type="ChEBI" id="CHEBI:18420"/>
    </cofactor>
    <text evidence="1">Binds 2 magnesium ions per monomer.</text>
</comment>
<comment type="pathway">
    <text evidence="1">Amino-acid biosynthesis; L-tryptophan biosynthesis; L-tryptophan from chorismate: step 2/5.</text>
</comment>
<comment type="subunit">
    <text evidence="1">Homodimer.</text>
</comment>
<comment type="similarity">
    <text evidence="1">Belongs to the anthranilate phosphoribosyltransferase family.</text>
</comment>